<organism>
    <name type="scientific">Glycine max</name>
    <name type="common">Soybean</name>
    <name type="synonym">Glycine hispida</name>
    <dbReference type="NCBI Taxonomy" id="3847"/>
    <lineage>
        <taxon>Eukaryota</taxon>
        <taxon>Viridiplantae</taxon>
        <taxon>Streptophyta</taxon>
        <taxon>Embryophyta</taxon>
        <taxon>Tracheophyta</taxon>
        <taxon>Spermatophyta</taxon>
        <taxon>Magnoliopsida</taxon>
        <taxon>eudicotyledons</taxon>
        <taxon>Gunneridae</taxon>
        <taxon>Pentapetalae</taxon>
        <taxon>rosids</taxon>
        <taxon>fabids</taxon>
        <taxon>Fabales</taxon>
        <taxon>Fabaceae</taxon>
        <taxon>Papilionoideae</taxon>
        <taxon>50 kb inversion clade</taxon>
        <taxon>NPAAA clade</taxon>
        <taxon>indigoferoid/millettioid clade</taxon>
        <taxon>Phaseoleae</taxon>
        <taxon>Glycine</taxon>
        <taxon>Glycine subgen. Soja</taxon>
    </lineage>
</organism>
<dbReference type="EMBL" id="S44893">
    <property type="protein sequence ID" value="AAB23463.1"/>
    <property type="molecule type" value="Genomic_DNA"/>
</dbReference>
<dbReference type="EMBL" id="CM000853">
    <property type="protein sequence ID" value="KRG91303.1"/>
    <property type="molecule type" value="Genomic_DNA"/>
</dbReference>
<dbReference type="EMBL" id="ACUP02012674">
    <property type="status" value="NOT_ANNOTATED_CDS"/>
    <property type="molecule type" value="Genomic_DNA"/>
</dbReference>
<dbReference type="PIR" id="JQ0969">
    <property type="entry name" value="FWSYCB"/>
</dbReference>
<dbReference type="PDB" id="1IPJ">
    <property type="method" value="X-ray"/>
    <property type="resolution" value="2.70 A"/>
    <property type="chains" value="A/B/C=24-439"/>
</dbReference>
<dbReference type="PDB" id="1IPK">
    <property type="method" value="X-ray"/>
    <property type="resolution" value="2.70 A"/>
    <property type="chains" value="A/B/C=24-439"/>
</dbReference>
<dbReference type="PDB" id="1UIJ">
    <property type="method" value="X-ray"/>
    <property type="resolution" value="2.50 A"/>
    <property type="chains" value="A/B/C/D/E/F=24-439"/>
</dbReference>
<dbReference type="PDBsum" id="1IPJ"/>
<dbReference type="PDBsum" id="1IPK"/>
<dbReference type="PDBsum" id="1UIJ"/>
<dbReference type="SMR" id="P25974"/>
<dbReference type="FunCoup" id="P25974">
    <property type="interactions" value="384"/>
</dbReference>
<dbReference type="STRING" id="3847.P25974"/>
<dbReference type="Allergome" id="5816">
    <property type="allergen name" value="Gly m 5"/>
</dbReference>
<dbReference type="Allergome" id="5819">
    <property type="allergen name" value="Gly m 5.0301"/>
</dbReference>
<dbReference type="Allergome" id="5820">
    <property type="allergen name" value="Gly m 5.0302"/>
</dbReference>
<dbReference type="GlyCosmos" id="P25974">
    <property type="glycosylation" value="1 site, No reported glycans"/>
</dbReference>
<dbReference type="iPTMnet" id="P25974"/>
<dbReference type="PaxDb" id="3847-GLYMA20G28460.1"/>
<dbReference type="EnsemblPlants" id="KRG91303">
    <property type="protein sequence ID" value="KRG91303"/>
    <property type="gene ID" value="GLYMA_20G146200"/>
</dbReference>
<dbReference type="Gramene" id="KRG91303">
    <property type="protein sequence ID" value="KRG91303"/>
    <property type="gene ID" value="GLYMA_20G146200"/>
</dbReference>
<dbReference type="eggNOG" id="ENOG502QQEP">
    <property type="taxonomic scope" value="Eukaryota"/>
</dbReference>
<dbReference type="HOGENOM" id="CLU_018703_0_1_1"/>
<dbReference type="InParanoid" id="P25974"/>
<dbReference type="OMA" id="CARFEMA"/>
<dbReference type="OrthoDB" id="1425232at2759"/>
<dbReference type="EvolutionaryTrace" id="P25974"/>
<dbReference type="Proteomes" id="UP000008827">
    <property type="component" value="Chromosome 20"/>
</dbReference>
<dbReference type="GO" id="GO:0033095">
    <property type="term" value="C:aleurone grain"/>
    <property type="evidence" value="ECO:0007669"/>
    <property type="project" value="UniProtKB-SubCell"/>
</dbReference>
<dbReference type="GO" id="GO:0005783">
    <property type="term" value="C:endoplasmic reticulum"/>
    <property type="evidence" value="ECO:0000314"/>
    <property type="project" value="UniProtKB"/>
</dbReference>
<dbReference type="GO" id="GO:0000326">
    <property type="term" value="C:protein storage vacuole"/>
    <property type="evidence" value="ECO:0000314"/>
    <property type="project" value="UniProtKB"/>
</dbReference>
<dbReference type="GO" id="GO:0045735">
    <property type="term" value="F:nutrient reservoir activity"/>
    <property type="evidence" value="ECO:0007669"/>
    <property type="project" value="UniProtKB-KW"/>
</dbReference>
<dbReference type="CDD" id="cd02245">
    <property type="entry name" value="cupin_7S_vicilin-like_C"/>
    <property type="match status" value="1"/>
</dbReference>
<dbReference type="CDD" id="cd02244">
    <property type="entry name" value="cupin_7S_vicilin-like_N"/>
    <property type="match status" value="1"/>
</dbReference>
<dbReference type="FunFam" id="2.60.120.10:FF:000162">
    <property type="entry name" value="Beta-conglycinin beta subunit 1"/>
    <property type="match status" value="1"/>
</dbReference>
<dbReference type="FunFam" id="2.60.120.10:FF:000181">
    <property type="entry name" value="Beta-conglycinin beta subunit 1"/>
    <property type="match status" value="1"/>
</dbReference>
<dbReference type="Gene3D" id="2.60.120.10">
    <property type="entry name" value="Jelly Rolls"/>
    <property type="match status" value="2"/>
</dbReference>
<dbReference type="InterPro" id="IPR006045">
    <property type="entry name" value="Cupin_1"/>
</dbReference>
<dbReference type="InterPro" id="IPR014710">
    <property type="entry name" value="RmlC-like_jellyroll"/>
</dbReference>
<dbReference type="InterPro" id="IPR011051">
    <property type="entry name" value="RmlC_Cupin_sf"/>
</dbReference>
<dbReference type="InterPro" id="IPR050253">
    <property type="entry name" value="Seed_Storage-Functional"/>
</dbReference>
<dbReference type="PANTHER" id="PTHR31189">
    <property type="entry name" value="OS03G0336100 PROTEIN-RELATED"/>
    <property type="match status" value="1"/>
</dbReference>
<dbReference type="PANTHER" id="PTHR31189:SF41">
    <property type="entry name" value="VICILIN C72"/>
    <property type="match status" value="1"/>
</dbReference>
<dbReference type="Pfam" id="PF00190">
    <property type="entry name" value="Cupin_1"/>
    <property type="match status" value="2"/>
</dbReference>
<dbReference type="SMART" id="SM00835">
    <property type="entry name" value="Cupin_1"/>
    <property type="match status" value="2"/>
</dbReference>
<dbReference type="SUPFAM" id="SSF51182">
    <property type="entry name" value="RmlC-like cupins"/>
    <property type="match status" value="2"/>
</dbReference>
<proteinExistence type="evidence at protein level"/>
<reference key="1">
    <citation type="journal article" date="1989" name="Plant Cell">
        <title>Soybean beta-conglycinin genes are clustered in several DNA regions and are regulated by transcriptional and posttranscriptional processes.</title>
        <authorList>
            <person name="Harada J.J."/>
            <person name="Barker S.J."/>
            <person name="Goldberg R.B."/>
        </authorList>
    </citation>
    <scope>NUCLEOTIDE SEQUENCE [GENOMIC DNA]</scope>
    <scope>DEVELOPMENTAL STAGE</scope>
    <source>
        <strain>cv. Dare</strain>
        <strain>cv. Forrest</strain>
    </source>
</reference>
<reference key="2">
    <citation type="journal article" date="2010" name="Nature">
        <title>Genome sequence of the palaeopolyploid soybean.</title>
        <authorList>
            <person name="Schmutz J."/>
            <person name="Cannon S.B."/>
            <person name="Schlueter J."/>
            <person name="Ma J."/>
            <person name="Mitros T."/>
            <person name="Nelson W."/>
            <person name="Hyten D.L."/>
            <person name="Song Q."/>
            <person name="Thelen J.J."/>
            <person name="Cheng J."/>
            <person name="Xu D."/>
            <person name="Hellsten U."/>
            <person name="May G.D."/>
            <person name="Yu Y."/>
            <person name="Sakurai T."/>
            <person name="Umezawa T."/>
            <person name="Bhattacharyya M.K."/>
            <person name="Sandhu D."/>
            <person name="Valliyodan B."/>
            <person name="Lindquist E."/>
            <person name="Peto M."/>
            <person name="Grant D."/>
            <person name="Shu S."/>
            <person name="Goodstein D."/>
            <person name="Barry K."/>
            <person name="Futrell-Griggs M."/>
            <person name="Abernathy B."/>
            <person name="Du J."/>
            <person name="Tian Z."/>
            <person name="Zhu L."/>
            <person name="Gill N."/>
            <person name="Joshi T."/>
            <person name="Libault M."/>
            <person name="Sethuraman A."/>
            <person name="Zhang X.-C."/>
            <person name="Shinozaki K."/>
            <person name="Nguyen H.T."/>
            <person name="Wing R.A."/>
            <person name="Cregan P."/>
            <person name="Specht J."/>
            <person name="Grimwood J."/>
            <person name="Rokhsar D."/>
            <person name="Stacey G."/>
            <person name="Shoemaker R.C."/>
            <person name="Jackson S.A."/>
        </authorList>
    </citation>
    <scope>NUCLEOTIDE SEQUENCE [LARGE SCALE GENOMIC DNA]</scope>
    <source>
        <strain>cv. Williams 82</strain>
    </source>
</reference>
<reference key="3">
    <citation type="journal article" date="1983" name="Plant Physiol.">
        <title>Glycinin composition of several perennial species related to soybean.</title>
        <authorList>
            <person name="Staswick P.E."/>
            <person name="Broue P."/>
            <person name="Nielsen N.C."/>
        </authorList>
    </citation>
    <scope>PROTEIN SEQUENCE OF 24-38</scope>
</reference>
<reference key="4">
    <citation type="journal article" date="1987" name="Phytochemistry">
        <title>Structural homology among the major 7s globulin subunits of soybean seed storage proteins.</title>
        <authorList>
            <person name="Hirano H."/>
            <person name="Kagawa H."/>
            <person name="Kamata Y."/>
            <person name="Yamauchi F."/>
        </authorList>
    </citation>
    <scope>PROTEIN SEQUENCE OF 24-50</scope>
    <source>
        <strain>cv. Raiden</strain>
    </source>
</reference>
<reference key="5">
    <citation type="journal article" date="2004" name="Plant J.">
        <title>The composition of newly synthesized proteins in the endoplasmic reticulum determines the transport pathways of soybean seed storage proteins.</title>
        <authorList>
            <person name="Mori T."/>
            <person name="Maruyama N."/>
            <person name="Nishizawa K."/>
            <person name="Higasa T."/>
            <person name="Yagasaki K."/>
            <person name="Ishimoto M."/>
            <person name="Utsumi S."/>
        </authorList>
    </citation>
    <scope>SUBUNIT</scope>
    <scope>SUBCELLULAR LOCATION</scope>
</reference>
<reference key="6">
    <citation type="journal article" date="2004" name="Plant Sci.">
        <title>A vacuolar sorting determinant of soybean beta-conglycinin beta subunit resides in a C-terminal sequence.</title>
        <authorList>
            <person name="Nishizawa K."/>
            <person name="Maruyama N."/>
            <person name="Satoh R."/>
            <person name="Higasa T."/>
            <person name="Utsumi S."/>
        </authorList>
    </citation>
    <scope>SUBCELLULAR LOCATION</scope>
</reference>
<reference key="7">
    <citation type="journal article" date="2009" name="J. Allergy Clin. Immunol.">
        <title>Soybean (Glycine max) allergy in Europe: Gly m 5 (beta-conglycinin) and Gly m 6 (glycinin) are potential diagnostic markers for severe allergic reactions to soy.</title>
        <authorList>
            <person name="Holzhauser T."/>
            <person name="Wackermann O."/>
            <person name="Ballmer-Weber B.K."/>
            <person name="Bindslev-Jensen C."/>
            <person name="Scibilia J."/>
            <person name="Perono-Garoffo L."/>
            <person name="Utsumi S."/>
            <person name="Poulsen L.K."/>
            <person name="Vieths S."/>
        </authorList>
    </citation>
    <scope>ALLERGEN</scope>
</reference>
<reference key="8">
    <citation type="journal article" date="2001" name="Eur. J. Biochem.">
        <title>Crystal structures of recombinant and native soybean beta-conglycinin beta homotrimers.</title>
        <authorList>
            <person name="Maruyama N."/>
            <person name="Adachi M."/>
            <person name="Takahashi K."/>
            <person name="Yagasaki K."/>
            <person name="Kohno M."/>
            <person name="Takenaka Y."/>
            <person name="Okuda E."/>
            <person name="Nakagawa S."/>
            <person name="Mikami B."/>
            <person name="Utsumi S."/>
        </authorList>
    </citation>
    <scope>X-RAY CRYSTALLOGRAPHY (2.70 ANGSTROMS) OF 24-439 OF WILD-TYPE PROTEIN</scope>
    <scope>GLYCOSYLATION AT ASN-351</scope>
</reference>
<reference key="9">
    <citation type="journal article" date="2003" name="Biochim. Biophys. Acta">
        <title>Creation of soybean beta-conglycinin beta with strong phagocytosis-stimulating activity.</title>
        <authorList>
            <person name="Maruyama N."/>
            <person name="Maruyama Y."/>
            <person name="Tsuruki T."/>
            <person name="Okuda E."/>
            <person name="Yoshikawa M."/>
            <person name="Utsumi S."/>
        </authorList>
    </citation>
    <scope>X-RAY CRYSTALLOGRAPHY (2.50 ANGSTROMS) OF 24-439 OF MUTANT PROTEIN</scope>
    <scope>MUTAGENESIS OF ILE-145 AND LYS-147</scope>
</reference>
<keyword id="KW-0002">3D-structure</keyword>
<keyword id="KW-0020">Allergen</keyword>
<keyword id="KW-0903">Direct protein sequencing</keyword>
<keyword id="KW-0256">Endoplasmic reticulum</keyword>
<keyword id="KW-0325">Glycoprotein</keyword>
<keyword id="KW-1185">Reference proteome</keyword>
<keyword id="KW-0708">Seed storage protein</keyword>
<keyword id="KW-0732">Signal</keyword>
<keyword id="KW-0758">Storage protein</keyword>
<keyword id="KW-0926">Vacuole</keyword>
<sequence>MMRVRFPLLVLLGTVFLASVCVSLKVREDENNPFYLRSSNSFQTLFENQNGRIRLLQRFNKRSPQLENLRDYRIVQFQSKPNTILLPHHADADFLLFVLSGRAILTLVNNDDRDSYNLHPGDAQRIPAGTTYYLVNPHDHQNLKIIKLAIPVNKPGRYDDFFLSSTQAQQSYLQGFSHNILETSFHSEFEEINRVLFGEEEEQRQQEGVIVELSKEQIRQLSRRAKSSSRKTISSEDEPFNLRSRNPIYSNNFGKFFEITPEKNPQLRDLDIFLSSVDINEGALLLPHFNSKAIVILVINEGDANIELVGIKEQQQKQKQEEEPLEVQRYRAELSEDDVFVIPAAYPFVVNATSNLNFLAFGINAENNQRNFLAGEKDNVVRQIERQVQELAFPGSAQDVERLLKKQRESYFVDAQPQQKEEGSKGRKGPFPSILGALY</sequence>
<feature type="signal peptide" evidence="15">
    <location>
        <begin position="1"/>
        <end position="23"/>
    </location>
</feature>
<feature type="chain" id="PRO_0000032191" description="Beta-conglycinin beta subunit 1" evidence="6 9">
    <location>
        <begin position="24"/>
        <end position="439"/>
    </location>
</feature>
<feature type="domain" description="Cupin type-1 1" evidence="1">
    <location>
        <begin position="34"/>
        <end position="193"/>
    </location>
</feature>
<feature type="domain" description="Cupin type-1 2" evidence="1">
    <location>
        <begin position="240"/>
        <end position="401"/>
    </location>
</feature>
<feature type="region of interest" description="Disordered" evidence="2">
    <location>
        <begin position="411"/>
        <end position="439"/>
    </location>
</feature>
<feature type="region of interest" description="Necessary for sorting to protein storage vacuole" evidence="10">
    <location>
        <begin position="430"/>
        <end position="439"/>
    </location>
</feature>
<feature type="glycosylation site" description="N-linked (GlcNAc...) asparagine" evidence="3">
    <location>
        <position position="351"/>
    </location>
</feature>
<feature type="mutagenesis site" description="Little or no effect on the secondary structure and strong phagocytosis-stimulating activity; when associated with T-147; F-147 or W-147." evidence="4">
    <original>I</original>
    <variation>M</variation>
    <location>
        <position position="145"/>
    </location>
</feature>
<feature type="mutagenesis site" description="Little or no effect on the secondary structure and strong phagocytosis-stimulating activity; when associated with M-145." evidence="4">
    <original>K</original>
    <variation>T</variation>
    <variation>F</variation>
    <variation>W</variation>
    <location>
        <position position="147"/>
    </location>
</feature>
<feature type="sequence conflict" description="In Ref. 1; AAB23463." evidence="12" ref="1">
    <original>L</original>
    <variation>F</variation>
    <location>
        <position position="36"/>
    </location>
</feature>
<feature type="sequence conflict" description="In Ref. 4; AA sequence." evidence="12" ref="4">
    <original>S</original>
    <variation>V</variation>
    <location>
        <position position="39"/>
    </location>
</feature>
<feature type="sequence conflict" description="In Ref. 4; AA sequence." evidence="12" ref="4">
    <original>T</original>
    <variation>G</variation>
    <location>
        <position position="44"/>
    </location>
</feature>
<feature type="sequence conflict" description="In Ref. 4; AA sequence." evidence="12" ref="4">
    <original>N</original>
    <variation>D</variation>
    <location>
        <position position="50"/>
    </location>
</feature>
<feature type="sequence conflict" description="In Ref. 1; AAB23463." evidence="12" ref="1">
    <original>G</original>
    <variation>V</variation>
    <location>
        <position position="51"/>
    </location>
</feature>
<feature type="strand" evidence="17">
    <location>
        <begin position="28"/>
        <end position="30"/>
    </location>
</feature>
<feature type="helix" evidence="18">
    <location>
        <begin position="38"/>
        <end position="40"/>
    </location>
</feature>
<feature type="strand" evidence="18">
    <location>
        <begin position="41"/>
        <end position="47"/>
    </location>
</feature>
<feature type="strand" evidence="18">
    <location>
        <begin position="49"/>
        <end position="56"/>
    </location>
</feature>
<feature type="helix" evidence="18">
    <location>
        <begin position="59"/>
        <end position="62"/>
    </location>
</feature>
<feature type="helix" evidence="18">
    <location>
        <begin position="64"/>
        <end position="69"/>
    </location>
</feature>
<feature type="strand" evidence="18">
    <location>
        <begin position="73"/>
        <end position="79"/>
    </location>
</feature>
<feature type="strand" evidence="18">
    <location>
        <begin position="83"/>
        <end position="101"/>
    </location>
</feature>
<feature type="strand" evidence="18">
    <location>
        <begin position="103"/>
        <end position="108"/>
    </location>
</feature>
<feature type="strand" evidence="18">
    <location>
        <begin position="113"/>
        <end position="118"/>
    </location>
</feature>
<feature type="strand" evidence="18">
    <location>
        <begin position="122"/>
        <end position="126"/>
    </location>
</feature>
<feature type="strand" evidence="18">
    <location>
        <begin position="131"/>
        <end position="136"/>
    </location>
</feature>
<feature type="strand" evidence="18">
    <location>
        <begin position="143"/>
        <end position="154"/>
    </location>
</feature>
<feature type="strand" evidence="18">
    <location>
        <begin position="160"/>
        <end position="164"/>
    </location>
</feature>
<feature type="strand" evidence="18">
    <location>
        <begin position="166"/>
        <end position="168"/>
    </location>
</feature>
<feature type="helix" evidence="18">
    <location>
        <begin position="172"/>
        <end position="175"/>
    </location>
</feature>
<feature type="helix" evidence="18">
    <location>
        <begin position="178"/>
        <end position="185"/>
    </location>
</feature>
<feature type="helix" evidence="18">
    <location>
        <begin position="189"/>
        <end position="196"/>
    </location>
</feature>
<feature type="helix" evidence="18">
    <location>
        <begin position="202"/>
        <end position="204"/>
    </location>
</feature>
<feature type="strand" evidence="18">
    <location>
        <begin position="205"/>
        <end position="212"/>
    </location>
</feature>
<feature type="helix" evidence="18">
    <location>
        <begin position="215"/>
        <end position="221"/>
    </location>
</feature>
<feature type="helix" evidence="18">
    <location>
        <begin position="230"/>
        <end position="234"/>
    </location>
</feature>
<feature type="strand" evidence="18">
    <location>
        <begin position="236"/>
        <end position="238"/>
    </location>
</feature>
<feature type="helix" evidence="17">
    <location>
        <begin position="242"/>
        <end position="244"/>
    </location>
</feature>
<feature type="strand" evidence="18">
    <location>
        <begin position="248"/>
        <end position="250"/>
    </location>
</feature>
<feature type="strand" evidence="18">
    <location>
        <begin position="252"/>
        <end position="259"/>
    </location>
</feature>
<feature type="turn" evidence="18">
    <location>
        <begin position="261"/>
        <end position="263"/>
    </location>
</feature>
<feature type="helix" evidence="18">
    <location>
        <begin position="265"/>
        <end position="270"/>
    </location>
</feature>
<feature type="strand" evidence="18">
    <location>
        <begin position="272"/>
        <end position="279"/>
    </location>
</feature>
<feature type="strand" evidence="18">
    <location>
        <begin position="283"/>
        <end position="292"/>
    </location>
</feature>
<feature type="strand" evidence="18">
    <location>
        <begin position="294"/>
        <end position="311"/>
    </location>
</feature>
<feature type="strand" evidence="18">
    <location>
        <begin position="327"/>
        <end position="335"/>
    </location>
</feature>
<feature type="strand" evidence="18">
    <location>
        <begin position="339"/>
        <end position="342"/>
    </location>
</feature>
<feature type="strand" evidence="18">
    <location>
        <begin position="348"/>
        <end position="363"/>
    </location>
</feature>
<feature type="strand" evidence="18">
    <location>
        <begin position="370"/>
        <end position="376"/>
    </location>
</feature>
<feature type="helix" evidence="18">
    <location>
        <begin position="381"/>
        <end position="383"/>
    </location>
</feature>
<feature type="helix" evidence="18">
    <location>
        <begin position="386"/>
        <end position="392"/>
    </location>
</feature>
<feature type="strand" evidence="18">
    <location>
        <begin position="393"/>
        <end position="395"/>
    </location>
</feature>
<feature type="helix" evidence="18">
    <location>
        <begin position="397"/>
        <end position="403"/>
    </location>
</feature>
<feature type="strand" evidence="18">
    <location>
        <begin position="411"/>
        <end position="414"/>
    </location>
</feature>
<comment type="function">
    <text evidence="14">Seed storage protein. Accumulates during seed development and is hydrolyzed after germination to provide a carbon and nitrogen source for the developing seedling.</text>
</comment>
<comment type="subunit">
    <text evidence="13">The alpha-, alpha'-, and beta-subunits associate in various combinations to form trimeric proteins.</text>
</comment>
<comment type="subcellular location">
    <subcellularLocation>
        <location evidence="12">Vacuole</location>
        <location evidence="12">Aleurone grain</location>
    </subcellularLocation>
    <subcellularLocation>
        <location evidence="5">Endoplasmic reticulum</location>
    </subcellularLocation>
    <subcellularLocation>
        <location evidence="5 10">Protein storage vacuole</location>
    </subcellularLocation>
    <text evidence="5 10">Localizes in protein storage vacuoles in cotyledons of developing and mature beans (PubMed:15447650, Ref.6). Synthesized and assembled into trimers in the endoplasmic reticulum, and transported to the protein storage vacuoles by the dense vesicles (PubMed:15447650).</text>
</comment>
<comment type="tissue specificity">
    <text evidence="14">Expressed in seeds. Not detected in cotyledons or in mature plants.</text>
</comment>
<comment type="developmental stage">
    <text evidence="8">Expressed early in embryogenesis, with a high transcription rate at midmaturation and then decreases prior to seed dormancy.</text>
</comment>
<comment type="PTM">
    <text evidence="3">The N-linked glycans are not essential for the folding and assembly into trimers.</text>
</comment>
<comment type="allergen">
    <text evidence="7">Causes an allergic reaction in human (PubMed:18996574). Binds to IgE of patients with severe allergic reactions (anaphylaxis) to soybean (PubMed:18996574).</text>
</comment>
<comment type="miscellaneous">
    <text evidence="4">Mutagenesis of Ile-145 and Lys-147 allow the creation of a beta-conglycinin beta chain containing a phagocytosis-stimulating peptide, soymetide, found normally only in the alpha' chain. The three mutants created exhibit phagocytosis activities after digestion by trypsin and the order is wild type &lt; I145M/K147T &lt; I145M/K147F &lt; I145M/K147W.</text>
</comment>
<comment type="similarity">
    <text evidence="12">Belongs to the 7S seed storage protein family.</text>
</comment>
<name>GLCB1_SOYBN</name>
<evidence type="ECO:0000255" key="1"/>
<evidence type="ECO:0000256" key="2">
    <source>
        <dbReference type="SAM" id="MobiDB-lite"/>
    </source>
</evidence>
<evidence type="ECO:0000269" key="3">
    <source>
    </source>
</evidence>
<evidence type="ECO:0000269" key="4">
    <source>
    </source>
</evidence>
<evidence type="ECO:0000269" key="5">
    <source>
    </source>
</evidence>
<evidence type="ECO:0000269" key="6">
    <source>
    </source>
</evidence>
<evidence type="ECO:0000269" key="7">
    <source>
    </source>
</evidence>
<evidence type="ECO:0000269" key="8">
    <source>
    </source>
</evidence>
<evidence type="ECO:0000269" key="9">
    <source ref="4"/>
</evidence>
<evidence type="ECO:0000269" key="10">
    <source ref="6"/>
</evidence>
<evidence type="ECO:0000303" key="11">
    <source>
    </source>
</evidence>
<evidence type="ECO:0000305" key="12"/>
<evidence type="ECO:0000305" key="13">
    <source>
    </source>
</evidence>
<evidence type="ECO:0000305" key="14">
    <source>
    </source>
</evidence>
<evidence type="ECO:0000305" key="15">
    <source ref="4"/>
</evidence>
<evidence type="ECO:0000312" key="16">
    <source>
        <dbReference type="EMBL" id="KRG91303.1"/>
    </source>
</evidence>
<evidence type="ECO:0007829" key="17">
    <source>
        <dbReference type="PDB" id="1IPK"/>
    </source>
</evidence>
<evidence type="ECO:0007829" key="18">
    <source>
        <dbReference type="PDB" id="1UIJ"/>
    </source>
</evidence>
<protein>
    <recommendedName>
        <fullName evidence="12">Beta-conglycinin beta subunit 1</fullName>
        <shortName evidence="12">CG-beta-1</shortName>
    </recommendedName>
    <alternativeName>
        <fullName evidence="11">Beta-conglycinin beta subunit</fullName>
    </alternativeName>
    <allergenName evidence="12">Gly m 5</allergenName>
</protein>
<accession>P25974</accession>
<accession>I1NGF4</accession>
<gene>
    <name evidence="11" type="primary">CG-4</name>
    <name evidence="16" type="ORF">GLYMA_20G146200</name>
</gene>